<feature type="chain" id="PRO_1000082776" description="UPF0246 protein Strop_2927">
    <location>
        <begin position="1"/>
        <end position="263"/>
    </location>
</feature>
<protein>
    <recommendedName>
        <fullName evidence="1">UPF0246 protein Strop_2927</fullName>
    </recommendedName>
</protein>
<proteinExistence type="inferred from homology"/>
<dbReference type="EMBL" id="CP000667">
    <property type="protein sequence ID" value="ABP55365.1"/>
    <property type="molecule type" value="Genomic_DNA"/>
</dbReference>
<dbReference type="RefSeq" id="WP_012014143.1">
    <property type="nucleotide sequence ID" value="NC_009380.1"/>
</dbReference>
<dbReference type="SMR" id="A4X915"/>
<dbReference type="KEGG" id="stp:Strop_2927"/>
<dbReference type="PATRIC" id="fig|369723.5.peg.3015"/>
<dbReference type="eggNOG" id="COG3022">
    <property type="taxonomic scope" value="Bacteria"/>
</dbReference>
<dbReference type="HOGENOM" id="CLU_061989_1_0_11"/>
<dbReference type="Proteomes" id="UP000000235">
    <property type="component" value="Chromosome"/>
</dbReference>
<dbReference type="GO" id="GO:0005829">
    <property type="term" value="C:cytosol"/>
    <property type="evidence" value="ECO:0007669"/>
    <property type="project" value="TreeGrafter"/>
</dbReference>
<dbReference type="GO" id="GO:0033194">
    <property type="term" value="P:response to hydroperoxide"/>
    <property type="evidence" value="ECO:0007669"/>
    <property type="project" value="TreeGrafter"/>
</dbReference>
<dbReference type="HAMAP" id="MF_00652">
    <property type="entry name" value="UPF0246"/>
    <property type="match status" value="1"/>
</dbReference>
<dbReference type="InterPro" id="IPR005583">
    <property type="entry name" value="YaaA"/>
</dbReference>
<dbReference type="PANTHER" id="PTHR30283:SF4">
    <property type="entry name" value="PEROXIDE STRESS RESISTANCE PROTEIN YAAA"/>
    <property type="match status" value="1"/>
</dbReference>
<dbReference type="PANTHER" id="PTHR30283">
    <property type="entry name" value="PEROXIDE STRESS RESPONSE PROTEIN YAAA"/>
    <property type="match status" value="1"/>
</dbReference>
<dbReference type="Pfam" id="PF03883">
    <property type="entry name" value="H2O2_YaaD"/>
    <property type="match status" value="1"/>
</dbReference>
<reference key="1">
    <citation type="journal article" date="2007" name="Proc. Natl. Acad. Sci. U.S.A.">
        <title>Genome sequencing reveals complex secondary metabolome in the marine actinomycete Salinispora tropica.</title>
        <authorList>
            <person name="Udwary D.W."/>
            <person name="Zeigler L."/>
            <person name="Asolkar R.N."/>
            <person name="Singan V."/>
            <person name="Lapidus A."/>
            <person name="Fenical W."/>
            <person name="Jensen P.R."/>
            <person name="Moore B.S."/>
        </authorList>
    </citation>
    <scope>NUCLEOTIDE SEQUENCE [LARGE SCALE GENOMIC DNA]</scope>
    <source>
        <strain>ATCC BAA-916 / DSM 44818 / JCM 13857 / NBRC 105044 / CNB-440</strain>
    </source>
</reference>
<keyword id="KW-1185">Reference proteome</keyword>
<comment type="similarity">
    <text evidence="1">Belongs to the UPF0246 family.</text>
</comment>
<name>Y2927_SALTO</name>
<accession>A4X915</accession>
<evidence type="ECO:0000255" key="1">
    <source>
        <dbReference type="HAMAP-Rule" id="MF_00652"/>
    </source>
</evidence>
<gene>
    <name type="ordered locus">Strop_2927</name>
</gene>
<sequence length="263" mass="29309">MIILIHTSKAMRPAPQGGATLTVPALRDRAEELATYLKTLSVEQFAAAMELSPELADRTHGLFADWGTEPERQSPAIDSFAGDIYSGLRACDLTPADRAYAEGRLRILSGLYGILRPEDGIQPYRLEMGYRLPDPPYANLYQFWGDAVARCLPRTGVIVDLAAVEYNRIVTRFLSRDRFVSPRFLTINPKTGEPRFVVVHAKIARGAFARWLLAARVEDPADIVDFAEIGYRYEPALSKPRQPAFVCQEFGGKGLSVRRHDLG</sequence>
<organism>
    <name type="scientific">Salinispora tropica (strain ATCC BAA-916 / DSM 44818 / JCM 13857 / NBRC 105044 / CNB-440)</name>
    <dbReference type="NCBI Taxonomy" id="369723"/>
    <lineage>
        <taxon>Bacteria</taxon>
        <taxon>Bacillati</taxon>
        <taxon>Actinomycetota</taxon>
        <taxon>Actinomycetes</taxon>
        <taxon>Micromonosporales</taxon>
        <taxon>Micromonosporaceae</taxon>
        <taxon>Salinispora</taxon>
    </lineage>
</organism>